<feature type="chain" id="PRO_0000119680" description="Glutamate--tRNA ligase 1">
    <location>
        <begin position="1"/>
        <end position="469"/>
    </location>
</feature>
<feature type="short sequence motif" description="'HIGH' region" evidence="1">
    <location>
        <begin position="8"/>
        <end position="18"/>
    </location>
</feature>
<feature type="short sequence motif" description="'KMSKS' region" evidence="1">
    <location>
        <begin position="250"/>
        <end position="254"/>
    </location>
</feature>
<feature type="binding site" evidence="1">
    <location>
        <position position="253"/>
    </location>
    <ligand>
        <name>ATP</name>
        <dbReference type="ChEBI" id="CHEBI:30616"/>
    </ligand>
</feature>
<feature type="strand" evidence="2">
    <location>
        <begin position="3"/>
        <end position="6"/>
    </location>
</feature>
<feature type="helix" evidence="2">
    <location>
        <begin position="16"/>
        <end position="32"/>
    </location>
</feature>
<feature type="strand" evidence="2">
    <location>
        <begin position="35"/>
        <end position="38"/>
    </location>
</feature>
<feature type="helix" evidence="2">
    <location>
        <begin position="48"/>
        <end position="50"/>
    </location>
</feature>
<feature type="helix" evidence="2">
    <location>
        <begin position="51"/>
        <end position="63"/>
    </location>
</feature>
<feature type="strand" evidence="2">
    <location>
        <begin position="68"/>
        <end position="70"/>
    </location>
</feature>
<feature type="turn" evidence="2">
    <location>
        <begin position="71"/>
        <end position="73"/>
    </location>
</feature>
<feature type="helix" evidence="2">
    <location>
        <begin position="82"/>
        <end position="85"/>
    </location>
</feature>
<feature type="helix" evidence="2">
    <location>
        <begin position="86"/>
        <end position="98"/>
    </location>
</feature>
<feature type="strand" evidence="2">
    <location>
        <begin position="101"/>
        <end position="105"/>
    </location>
</feature>
<feature type="turn" evidence="2">
    <location>
        <begin position="110"/>
        <end position="112"/>
    </location>
</feature>
<feature type="helix" evidence="2">
    <location>
        <begin position="113"/>
        <end position="121"/>
    </location>
</feature>
<feature type="helix" evidence="2">
    <location>
        <begin position="130"/>
        <end position="133"/>
    </location>
</feature>
<feature type="turn" evidence="2">
    <location>
        <begin position="134"/>
        <end position="136"/>
    </location>
</feature>
<feature type="helix" evidence="2">
    <location>
        <begin position="139"/>
        <end position="147"/>
    </location>
</feature>
<feature type="strand" evidence="2">
    <location>
        <begin position="153"/>
        <end position="156"/>
    </location>
</feature>
<feature type="strand" evidence="2">
    <location>
        <begin position="163"/>
        <end position="167"/>
    </location>
</feature>
<feature type="turn" evidence="2">
    <location>
        <begin position="168"/>
        <end position="170"/>
    </location>
</feature>
<feature type="strand" evidence="2">
    <location>
        <begin position="171"/>
        <end position="175"/>
    </location>
</feature>
<feature type="strand" evidence="2">
    <location>
        <begin position="182"/>
        <end position="186"/>
    </location>
</feature>
<feature type="helix" evidence="2">
    <location>
        <begin position="194"/>
        <end position="204"/>
    </location>
</feature>
<feature type="strand" evidence="2">
    <location>
        <begin position="208"/>
        <end position="213"/>
    </location>
</feature>
<feature type="helix" evidence="2">
    <location>
        <begin position="214"/>
        <end position="216"/>
    </location>
</feature>
<feature type="helix" evidence="2">
    <location>
        <begin position="217"/>
        <end position="229"/>
    </location>
</feature>
<feature type="strand" evidence="2">
    <location>
        <begin position="236"/>
        <end position="240"/>
    </location>
</feature>
<feature type="strand" evidence="2">
    <location>
        <begin position="248"/>
        <end position="250"/>
    </location>
</feature>
<feature type="helix" evidence="2">
    <location>
        <begin position="253"/>
        <end position="255"/>
    </location>
</feature>
<feature type="helix" evidence="2">
    <location>
        <begin position="260"/>
        <end position="266"/>
    </location>
</feature>
<feature type="helix" evidence="2">
    <location>
        <begin position="270"/>
        <end position="278"/>
    </location>
</feature>
<feature type="strand" evidence="2">
    <location>
        <begin position="280"/>
        <end position="282"/>
    </location>
</feature>
<feature type="helix" evidence="2">
    <location>
        <begin position="293"/>
        <end position="299"/>
    </location>
</feature>
<feature type="helix" evidence="2">
    <location>
        <begin position="302"/>
        <end position="304"/>
    </location>
</feature>
<feature type="helix" evidence="2">
    <location>
        <begin position="314"/>
        <end position="327"/>
    </location>
</feature>
<feature type="helix" evidence="2">
    <location>
        <begin position="330"/>
        <end position="343"/>
    </location>
</feature>
<feature type="helix" evidence="2">
    <location>
        <begin position="351"/>
        <end position="361"/>
    </location>
</feature>
<feature type="turn" evidence="2">
    <location>
        <begin position="362"/>
        <end position="364"/>
    </location>
</feature>
<feature type="helix" evidence="2">
    <location>
        <begin position="368"/>
        <end position="370"/>
    </location>
</feature>
<feature type="helix" evidence="2">
    <location>
        <begin position="371"/>
        <end position="374"/>
    </location>
</feature>
<feature type="helix" evidence="2">
    <location>
        <begin position="376"/>
        <end position="378"/>
    </location>
</feature>
<feature type="helix" evidence="2">
    <location>
        <begin position="389"/>
        <end position="391"/>
    </location>
</feature>
<feature type="helix" evidence="2">
    <location>
        <begin position="392"/>
        <end position="401"/>
    </location>
</feature>
<feature type="turn" evidence="2">
    <location>
        <begin position="402"/>
        <end position="404"/>
    </location>
</feature>
<feature type="helix" evidence="2">
    <location>
        <begin position="409"/>
        <end position="423"/>
    </location>
</feature>
<feature type="helix" evidence="2">
    <location>
        <begin position="427"/>
        <end position="438"/>
    </location>
</feature>
<feature type="strand" evidence="2">
    <location>
        <begin position="440"/>
        <end position="442"/>
    </location>
</feature>
<feature type="helix" evidence="2">
    <location>
        <begin position="447"/>
        <end position="453"/>
    </location>
</feature>
<feature type="helix" evidence="2">
    <location>
        <begin position="456"/>
        <end position="466"/>
    </location>
</feature>
<gene>
    <name evidence="1" type="primary">gltX1</name>
    <name type="ordered locus">TM_1351</name>
</gene>
<accession>Q9X172</accession>
<dbReference type="EC" id="6.1.1.17" evidence="1"/>
<dbReference type="EMBL" id="AE000512">
    <property type="protein sequence ID" value="AAD36422.1"/>
    <property type="molecule type" value="Genomic_DNA"/>
</dbReference>
<dbReference type="PIR" id="G72264">
    <property type="entry name" value="G72264"/>
</dbReference>
<dbReference type="RefSeq" id="NP_229152.1">
    <property type="nucleotide sequence ID" value="NC_000853.1"/>
</dbReference>
<dbReference type="PDB" id="2O5R">
    <property type="method" value="X-ray"/>
    <property type="resolution" value="2.34 A"/>
    <property type="chains" value="A=1-469"/>
</dbReference>
<dbReference type="PDBsum" id="2O5R"/>
<dbReference type="SMR" id="Q9X172"/>
<dbReference type="FunCoup" id="Q9X172">
    <property type="interactions" value="403"/>
</dbReference>
<dbReference type="STRING" id="243274.TM_1351"/>
<dbReference type="PaxDb" id="243274-THEMA_07585"/>
<dbReference type="EnsemblBacteria" id="AAD36422">
    <property type="protein sequence ID" value="AAD36422"/>
    <property type="gene ID" value="TM_1351"/>
</dbReference>
<dbReference type="KEGG" id="tma:TM1351"/>
<dbReference type="KEGG" id="tmi:THEMA_07585"/>
<dbReference type="KEGG" id="tmm:Tmari_1358"/>
<dbReference type="KEGG" id="tmw:THMA_1376"/>
<dbReference type="eggNOG" id="COG0008">
    <property type="taxonomic scope" value="Bacteria"/>
</dbReference>
<dbReference type="InParanoid" id="Q9X172"/>
<dbReference type="OrthoDB" id="9807503at2"/>
<dbReference type="EvolutionaryTrace" id="Q9X172"/>
<dbReference type="Proteomes" id="UP000008183">
    <property type="component" value="Chromosome"/>
</dbReference>
<dbReference type="GO" id="GO:0005829">
    <property type="term" value="C:cytosol"/>
    <property type="evidence" value="ECO:0000318"/>
    <property type="project" value="GO_Central"/>
</dbReference>
<dbReference type="GO" id="GO:0005524">
    <property type="term" value="F:ATP binding"/>
    <property type="evidence" value="ECO:0007669"/>
    <property type="project" value="UniProtKB-UniRule"/>
</dbReference>
<dbReference type="GO" id="GO:0004818">
    <property type="term" value="F:glutamate-tRNA ligase activity"/>
    <property type="evidence" value="ECO:0000318"/>
    <property type="project" value="GO_Central"/>
</dbReference>
<dbReference type="GO" id="GO:0000049">
    <property type="term" value="F:tRNA binding"/>
    <property type="evidence" value="ECO:0007669"/>
    <property type="project" value="InterPro"/>
</dbReference>
<dbReference type="GO" id="GO:0008270">
    <property type="term" value="F:zinc ion binding"/>
    <property type="evidence" value="ECO:0007669"/>
    <property type="project" value="InterPro"/>
</dbReference>
<dbReference type="GO" id="GO:0006424">
    <property type="term" value="P:glutamyl-tRNA aminoacylation"/>
    <property type="evidence" value="ECO:0000318"/>
    <property type="project" value="GO_Central"/>
</dbReference>
<dbReference type="CDD" id="cd00808">
    <property type="entry name" value="GluRS_core"/>
    <property type="match status" value="1"/>
</dbReference>
<dbReference type="FunFam" id="1.10.8.70:FF:000003">
    <property type="entry name" value="Glutamate--tRNA ligase 1"/>
    <property type="match status" value="1"/>
</dbReference>
<dbReference type="FunFam" id="1.10.1160.10:FF:000003">
    <property type="entry name" value="Glutamate--tRNA ligase 2"/>
    <property type="match status" value="1"/>
</dbReference>
<dbReference type="FunFam" id="3.40.50.620:FF:000045">
    <property type="entry name" value="Glutamate--tRNA ligase, mitochondrial"/>
    <property type="match status" value="1"/>
</dbReference>
<dbReference type="Gene3D" id="1.10.10.350">
    <property type="match status" value="1"/>
</dbReference>
<dbReference type="Gene3D" id="1.10.8.70">
    <property type="entry name" value="Glutamate-tRNA synthetase, class I, anticodon-binding domain 1"/>
    <property type="match status" value="1"/>
</dbReference>
<dbReference type="Gene3D" id="1.10.1160.10">
    <property type="entry name" value="Glutamyl-trna Synthetase, Domain 2"/>
    <property type="match status" value="1"/>
</dbReference>
<dbReference type="Gene3D" id="3.90.800.10">
    <property type="entry name" value="Glutamyl-tRNA Synthetase, Domain 3"/>
    <property type="match status" value="1"/>
</dbReference>
<dbReference type="Gene3D" id="3.40.50.620">
    <property type="entry name" value="HUPs"/>
    <property type="match status" value="1"/>
</dbReference>
<dbReference type="HAMAP" id="MF_00022">
    <property type="entry name" value="Glu_tRNA_synth_type1"/>
    <property type="match status" value="1"/>
</dbReference>
<dbReference type="InterPro" id="IPR045462">
    <property type="entry name" value="aa-tRNA-synth_I_cd-bd"/>
</dbReference>
<dbReference type="InterPro" id="IPR020751">
    <property type="entry name" value="aa-tRNA-synth_I_codon-bd_sub2"/>
</dbReference>
<dbReference type="InterPro" id="IPR001412">
    <property type="entry name" value="aa-tRNA-synth_I_CS"/>
</dbReference>
<dbReference type="InterPro" id="IPR008925">
    <property type="entry name" value="aa_tRNA-synth_I_cd-bd_sf"/>
</dbReference>
<dbReference type="InterPro" id="IPR004527">
    <property type="entry name" value="Glu-tRNA-ligase_bac/mito"/>
</dbReference>
<dbReference type="InterPro" id="IPR020752">
    <property type="entry name" value="Glu-tRNA-synth_I_codon-bd_sub1"/>
</dbReference>
<dbReference type="InterPro" id="IPR000924">
    <property type="entry name" value="Glu/Gln-tRNA-synth"/>
</dbReference>
<dbReference type="InterPro" id="IPR020058">
    <property type="entry name" value="Glu/Gln-tRNA-synth_Ib_cat-dom"/>
</dbReference>
<dbReference type="InterPro" id="IPR020061">
    <property type="entry name" value="Glu_tRNA_lig_a-bdl"/>
</dbReference>
<dbReference type="InterPro" id="IPR049940">
    <property type="entry name" value="GluQ/Sye"/>
</dbReference>
<dbReference type="InterPro" id="IPR033910">
    <property type="entry name" value="GluRS_core"/>
</dbReference>
<dbReference type="InterPro" id="IPR014729">
    <property type="entry name" value="Rossmann-like_a/b/a_fold"/>
</dbReference>
<dbReference type="NCBIfam" id="TIGR00464">
    <property type="entry name" value="gltX_bact"/>
    <property type="match status" value="1"/>
</dbReference>
<dbReference type="PANTHER" id="PTHR43311">
    <property type="entry name" value="GLUTAMATE--TRNA LIGASE"/>
    <property type="match status" value="1"/>
</dbReference>
<dbReference type="PANTHER" id="PTHR43311:SF2">
    <property type="entry name" value="GLUTAMATE--TRNA LIGASE, MITOCHONDRIAL-RELATED"/>
    <property type="match status" value="1"/>
</dbReference>
<dbReference type="Pfam" id="PF19269">
    <property type="entry name" value="Anticodon_2"/>
    <property type="match status" value="1"/>
</dbReference>
<dbReference type="Pfam" id="PF00749">
    <property type="entry name" value="tRNA-synt_1c"/>
    <property type="match status" value="1"/>
</dbReference>
<dbReference type="PRINTS" id="PR00987">
    <property type="entry name" value="TRNASYNTHGLU"/>
</dbReference>
<dbReference type="SUPFAM" id="SSF48163">
    <property type="entry name" value="An anticodon-binding domain of class I aminoacyl-tRNA synthetases"/>
    <property type="match status" value="1"/>
</dbReference>
<dbReference type="SUPFAM" id="SSF52374">
    <property type="entry name" value="Nucleotidylyl transferase"/>
    <property type="match status" value="1"/>
</dbReference>
<dbReference type="PROSITE" id="PS00178">
    <property type="entry name" value="AA_TRNA_LIGASE_I"/>
    <property type="match status" value="1"/>
</dbReference>
<name>SYE1_THEMA</name>
<keyword id="KW-0002">3D-structure</keyword>
<keyword id="KW-0030">Aminoacyl-tRNA synthetase</keyword>
<keyword id="KW-0067">ATP-binding</keyword>
<keyword id="KW-0963">Cytoplasm</keyword>
<keyword id="KW-0436">Ligase</keyword>
<keyword id="KW-0547">Nucleotide-binding</keyword>
<keyword id="KW-0648">Protein biosynthesis</keyword>
<keyword id="KW-1185">Reference proteome</keyword>
<sequence>MVRVRFAPSPTGFLHVGGARTALFNFLFARKEKGKFILRIEDTDLERSEREYEEKLMESLRWLGLLWDEGPDVGGDHGPYRQSERVEIYREHAERLVKEGKAYYVYAYPEEIEEMREKLLSEGKAPHYSQEMFEKFDTPERRREYEEKGLRPAVFFKMPRKDYVLNDVVKGEVVFKTGAIGDFVIMRSNGLPTYNFACVVDDMLMEITHVIRGDDHLSNTLRQLALYEAFEKAPPVFAHVSTILGPDGKKLSKRHGATSVEAFRDMGYLPEALVNYLALLGWSHPEGKELLTLEELISSFSLDRLSPNPAIFDPQKLKWMNGYYLRNMPIEKLAELAKPFFEKAGIKIIDEEYFKKVLEITKERVEVLSEFPEESRFFFEDPAPVEIPEEMKEVFSQLKEELQNVRWTMEEITPVFKKVLKQHGVKPKEFYMTLRRVLTGREEGPELVNIIPLLGKEIFLRRIERSLGG</sequence>
<organism>
    <name type="scientific">Thermotoga maritima (strain ATCC 43589 / DSM 3109 / JCM 10099 / NBRC 100826 / MSB8)</name>
    <dbReference type="NCBI Taxonomy" id="243274"/>
    <lineage>
        <taxon>Bacteria</taxon>
        <taxon>Thermotogati</taxon>
        <taxon>Thermotogota</taxon>
        <taxon>Thermotogae</taxon>
        <taxon>Thermotogales</taxon>
        <taxon>Thermotogaceae</taxon>
        <taxon>Thermotoga</taxon>
    </lineage>
</organism>
<comment type="function">
    <text evidence="1">Catalyzes the attachment of glutamate to tRNA(Glu) in a two-step reaction: glutamate is first activated by ATP to form Glu-AMP and then transferred to the acceptor end of tRNA(Glu).</text>
</comment>
<comment type="catalytic activity">
    <reaction evidence="1">
        <text>tRNA(Glu) + L-glutamate + ATP = L-glutamyl-tRNA(Glu) + AMP + diphosphate</text>
        <dbReference type="Rhea" id="RHEA:23540"/>
        <dbReference type="Rhea" id="RHEA-COMP:9663"/>
        <dbReference type="Rhea" id="RHEA-COMP:9680"/>
        <dbReference type="ChEBI" id="CHEBI:29985"/>
        <dbReference type="ChEBI" id="CHEBI:30616"/>
        <dbReference type="ChEBI" id="CHEBI:33019"/>
        <dbReference type="ChEBI" id="CHEBI:78442"/>
        <dbReference type="ChEBI" id="CHEBI:78520"/>
        <dbReference type="ChEBI" id="CHEBI:456215"/>
        <dbReference type="EC" id="6.1.1.17"/>
    </reaction>
</comment>
<comment type="subunit">
    <text evidence="1">Monomer.</text>
</comment>
<comment type="subcellular location">
    <subcellularLocation>
        <location evidence="1">Cytoplasm</location>
    </subcellularLocation>
</comment>
<comment type="similarity">
    <text evidence="1">Belongs to the class-I aminoacyl-tRNA synthetase family. Glutamate--tRNA ligase type 1 subfamily.</text>
</comment>
<reference key="1">
    <citation type="journal article" date="1999" name="Nature">
        <title>Evidence for lateral gene transfer between Archaea and Bacteria from genome sequence of Thermotoga maritima.</title>
        <authorList>
            <person name="Nelson K.E."/>
            <person name="Clayton R.A."/>
            <person name="Gill S.R."/>
            <person name="Gwinn M.L."/>
            <person name="Dodson R.J."/>
            <person name="Haft D.H."/>
            <person name="Hickey E.K."/>
            <person name="Peterson J.D."/>
            <person name="Nelson W.C."/>
            <person name="Ketchum K.A."/>
            <person name="McDonald L.A."/>
            <person name="Utterback T.R."/>
            <person name="Malek J.A."/>
            <person name="Linher K.D."/>
            <person name="Garrett M.M."/>
            <person name="Stewart A.M."/>
            <person name="Cotton M.D."/>
            <person name="Pratt M.S."/>
            <person name="Phillips C.A."/>
            <person name="Richardson D.L."/>
            <person name="Heidelberg J.F."/>
            <person name="Sutton G.G."/>
            <person name="Fleischmann R.D."/>
            <person name="Eisen J.A."/>
            <person name="White O."/>
            <person name="Salzberg S.L."/>
            <person name="Smith H.O."/>
            <person name="Venter J.C."/>
            <person name="Fraser C.M."/>
        </authorList>
    </citation>
    <scope>NUCLEOTIDE SEQUENCE [LARGE SCALE GENOMIC DNA]</scope>
    <source>
        <strain>ATCC 43589 / DSM 3109 / JCM 10099 / NBRC 100826 / MSB8</strain>
    </source>
</reference>
<reference key="2">
    <citation type="submission" date="2006-12" db="PDB data bank">
        <title>Crystal structure of glutamyl-tRNA synthetase 1 (EC 6.1.1.17) (glutamate-tRNA ligase 1) (glurS 1) (TM1351) from Thermotoga maritima at 2.5 A resolution.</title>
        <authorList>
            <consortium name="Joint center for structural genomics (JCSG)"/>
        </authorList>
    </citation>
    <scope>X-RAY CRYSTALLOGRAPHY (2.34 ANGSTROMS)</scope>
</reference>
<evidence type="ECO:0000255" key="1">
    <source>
        <dbReference type="HAMAP-Rule" id="MF_00022"/>
    </source>
</evidence>
<evidence type="ECO:0007829" key="2">
    <source>
        <dbReference type="PDB" id="2O5R"/>
    </source>
</evidence>
<proteinExistence type="evidence at protein level"/>
<protein>
    <recommendedName>
        <fullName evidence="1">Glutamate--tRNA ligase 1</fullName>
        <ecNumber evidence="1">6.1.1.17</ecNumber>
    </recommendedName>
    <alternativeName>
        <fullName evidence="1">Glutamyl-tRNA synthetase 1</fullName>
        <shortName evidence="1">GluRS 1</shortName>
    </alternativeName>
</protein>